<name>BGL44_ARATH</name>
<evidence type="ECO:0000250" key="1">
    <source>
        <dbReference type="UniProtKB" id="Q1XH05"/>
    </source>
</evidence>
<evidence type="ECO:0000250" key="2">
    <source>
        <dbReference type="UniProtKB" id="Q75I93"/>
    </source>
</evidence>
<evidence type="ECO:0000250" key="3">
    <source>
        <dbReference type="UniProtKB" id="Q7XSK0"/>
    </source>
</evidence>
<evidence type="ECO:0000250" key="4">
    <source>
        <dbReference type="UniProtKB" id="Q9SPP9"/>
    </source>
</evidence>
<evidence type="ECO:0000255" key="5"/>
<evidence type="ECO:0000255" key="6">
    <source>
        <dbReference type="PROSITE-ProRule" id="PRU00498"/>
    </source>
</evidence>
<evidence type="ECO:0000269" key="7">
    <source>
    </source>
</evidence>
<evidence type="ECO:0000303" key="8">
    <source>
    </source>
</evidence>
<evidence type="ECO:0000305" key="9"/>
<evidence type="ECO:0000312" key="10">
    <source>
        <dbReference type="Araport" id="AT3G18080"/>
    </source>
</evidence>
<evidence type="ECO:0000312" key="11">
    <source>
        <dbReference type="EMBL" id="BAB02020.1"/>
    </source>
</evidence>
<dbReference type="EC" id="3.2.1.21" evidence="7"/>
<dbReference type="EMBL" id="AB020749">
    <property type="protein sequence ID" value="BAB02020.1"/>
    <property type="molecule type" value="Genomic_DNA"/>
</dbReference>
<dbReference type="EMBL" id="CP002686">
    <property type="protein sequence ID" value="AEE76044.1"/>
    <property type="molecule type" value="Genomic_DNA"/>
</dbReference>
<dbReference type="EMBL" id="AK316840">
    <property type="protein sequence ID" value="BAH19552.1"/>
    <property type="molecule type" value="mRNA"/>
</dbReference>
<dbReference type="EMBL" id="AK316900">
    <property type="protein sequence ID" value="BAH19607.1"/>
    <property type="molecule type" value="mRNA"/>
</dbReference>
<dbReference type="EMBL" id="AY084864">
    <property type="protein sequence ID" value="AAM61427.1"/>
    <property type="molecule type" value="mRNA"/>
</dbReference>
<dbReference type="RefSeq" id="NP_188436.1">
    <property type="nucleotide sequence ID" value="NM_112690.4"/>
</dbReference>
<dbReference type="SMR" id="Q9LV33"/>
<dbReference type="FunCoup" id="Q9LV33">
    <property type="interactions" value="872"/>
</dbReference>
<dbReference type="STRING" id="3702.Q9LV33"/>
<dbReference type="CAZy" id="GH1">
    <property type="family name" value="Glycoside Hydrolase Family 1"/>
</dbReference>
<dbReference type="GlyCosmos" id="Q9LV33">
    <property type="glycosylation" value="3 sites, No reported glycans"/>
</dbReference>
<dbReference type="GlyGen" id="Q9LV33">
    <property type="glycosylation" value="3 sites"/>
</dbReference>
<dbReference type="PaxDb" id="3702-AT3G18080.1"/>
<dbReference type="ProteomicsDB" id="240424"/>
<dbReference type="EnsemblPlants" id="AT3G18080.1">
    <property type="protein sequence ID" value="AT3G18080.1"/>
    <property type="gene ID" value="AT3G18080"/>
</dbReference>
<dbReference type="GeneID" id="821333"/>
<dbReference type="Gramene" id="AT3G18080.1">
    <property type="protein sequence ID" value="AT3G18080.1"/>
    <property type="gene ID" value="AT3G18080"/>
</dbReference>
<dbReference type="KEGG" id="ath:AT3G18080"/>
<dbReference type="Araport" id="AT3G18080"/>
<dbReference type="TAIR" id="AT3G18080">
    <property type="gene designation" value="BGLU44"/>
</dbReference>
<dbReference type="eggNOG" id="KOG0626">
    <property type="taxonomic scope" value="Eukaryota"/>
</dbReference>
<dbReference type="HOGENOM" id="CLU_001859_1_0_1"/>
<dbReference type="InParanoid" id="Q9LV33"/>
<dbReference type="OMA" id="VWLKVYP"/>
<dbReference type="PhylomeDB" id="Q9LV33"/>
<dbReference type="CD-CODE" id="4299E36E">
    <property type="entry name" value="Nucleolus"/>
</dbReference>
<dbReference type="PRO" id="PR:Q9LV33"/>
<dbReference type="Proteomes" id="UP000006548">
    <property type="component" value="Chromosome 3"/>
</dbReference>
<dbReference type="ExpressionAtlas" id="Q9LV33">
    <property type="expression patterns" value="baseline and differential"/>
</dbReference>
<dbReference type="GO" id="GO:0022626">
    <property type="term" value="C:cytosolic ribosome"/>
    <property type="evidence" value="ECO:0007005"/>
    <property type="project" value="TAIR"/>
</dbReference>
<dbReference type="GO" id="GO:0005576">
    <property type="term" value="C:extracellular region"/>
    <property type="evidence" value="ECO:0007669"/>
    <property type="project" value="UniProtKB-SubCell"/>
</dbReference>
<dbReference type="GO" id="GO:0009505">
    <property type="term" value="C:plant-type cell wall"/>
    <property type="evidence" value="ECO:0007005"/>
    <property type="project" value="TAIR"/>
</dbReference>
<dbReference type="GO" id="GO:0080081">
    <property type="term" value="F:4-methylumbelliferyl-beta-D-glucopyranoside beta-glucosidase activity"/>
    <property type="evidence" value="ECO:0000314"/>
    <property type="project" value="TAIR"/>
</dbReference>
<dbReference type="GO" id="GO:0047668">
    <property type="term" value="F:amygdalin beta-glucosidase activity"/>
    <property type="evidence" value="ECO:0000314"/>
    <property type="project" value="TAIR"/>
</dbReference>
<dbReference type="GO" id="GO:0080083">
    <property type="term" value="F:beta-gentiobiose beta-glucosidase activity"/>
    <property type="evidence" value="ECO:0000314"/>
    <property type="project" value="TAIR"/>
</dbReference>
<dbReference type="GO" id="GO:0008422">
    <property type="term" value="F:beta-glucosidase activity"/>
    <property type="evidence" value="ECO:0000314"/>
    <property type="project" value="UniProtKB"/>
</dbReference>
<dbReference type="GO" id="GO:0004567">
    <property type="term" value="F:beta-mannosidase activity"/>
    <property type="evidence" value="ECO:0000314"/>
    <property type="project" value="UniProtKB"/>
</dbReference>
<dbReference type="GO" id="GO:0080079">
    <property type="term" value="F:cellobiose glucosidase activity"/>
    <property type="evidence" value="ECO:0000314"/>
    <property type="project" value="TAIR"/>
</dbReference>
<dbReference type="GO" id="GO:0080082">
    <property type="term" value="F:esculin beta-glucosidase activity"/>
    <property type="evidence" value="ECO:0000314"/>
    <property type="project" value="TAIR"/>
</dbReference>
<dbReference type="GO" id="GO:0046872">
    <property type="term" value="F:metal ion binding"/>
    <property type="evidence" value="ECO:0007669"/>
    <property type="project" value="UniProtKB-KW"/>
</dbReference>
<dbReference type="GO" id="GO:0005975">
    <property type="term" value="P:carbohydrate metabolic process"/>
    <property type="evidence" value="ECO:0007669"/>
    <property type="project" value="InterPro"/>
</dbReference>
<dbReference type="FunFam" id="3.20.20.80:FF:000041">
    <property type="entry name" value="Beta-glucosidase 7"/>
    <property type="match status" value="1"/>
</dbReference>
<dbReference type="Gene3D" id="3.20.20.80">
    <property type="entry name" value="Glycosidases"/>
    <property type="match status" value="1"/>
</dbReference>
<dbReference type="InterPro" id="IPR001360">
    <property type="entry name" value="Glyco_hydro_1"/>
</dbReference>
<dbReference type="InterPro" id="IPR017853">
    <property type="entry name" value="Glycoside_hydrolase_SF"/>
</dbReference>
<dbReference type="PANTHER" id="PTHR10353:SF28">
    <property type="entry name" value="BETA-GLUCOSIDASE 44"/>
    <property type="match status" value="1"/>
</dbReference>
<dbReference type="PANTHER" id="PTHR10353">
    <property type="entry name" value="GLYCOSYL HYDROLASE"/>
    <property type="match status" value="1"/>
</dbReference>
<dbReference type="Pfam" id="PF00232">
    <property type="entry name" value="Glyco_hydro_1"/>
    <property type="match status" value="1"/>
</dbReference>
<dbReference type="PRINTS" id="PR00131">
    <property type="entry name" value="GLHYDRLASE1"/>
</dbReference>
<dbReference type="SUPFAM" id="SSF51445">
    <property type="entry name" value="(Trans)glycosidases"/>
    <property type="match status" value="1"/>
</dbReference>
<gene>
    <name evidence="8" type="primary">BGLU44</name>
    <name evidence="10" type="ordered locus">At3g18080</name>
    <name evidence="11" type="ORF">MRC8.20</name>
</gene>
<proteinExistence type="evidence at protein level"/>
<reference key="1">
    <citation type="journal article" date="2000" name="DNA Res.">
        <title>Structural analysis of Arabidopsis thaliana chromosome 3. II. Sequence features of the 4,251,695 bp regions covered by 90 P1, TAC and BAC clones.</title>
        <authorList>
            <person name="Kaneko T."/>
            <person name="Katoh T."/>
            <person name="Sato S."/>
            <person name="Nakamura Y."/>
            <person name="Asamizu E."/>
            <person name="Tabata S."/>
        </authorList>
    </citation>
    <scope>NUCLEOTIDE SEQUENCE [LARGE SCALE GENOMIC DNA]</scope>
    <source>
        <strain>cv. Columbia</strain>
    </source>
</reference>
<reference key="2">
    <citation type="journal article" date="2017" name="Plant J.">
        <title>Araport11: a complete reannotation of the Arabidopsis thaliana reference genome.</title>
        <authorList>
            <person name="Cheng C.Y."/>
            <person name="Krishnakumar V."/>
            <person name="Chan A.P."/>
            <person name="Thibaud-Nissen F."/>
            <person name="Schobel S."/>
            <person name="Town C.D."/>
        </authorList>
    </citation>
    <scope>GENOME REANNOTATION</scope>
    <source>
        <strain>cv. Columbia</strain>
    </source>
</reference>
<reference key="3">
    <citation type="journal article" date="2009" name="DNA Res.">
        <title>Analysis of multiple occurrences of alternative splicing events in Arabidopsis thaliana using novel sequenced full-length cDNAs.</title>
        <authorList>
            <person name="Iida K."/>
            <person name="Fukami-Kobayashi K."/>
            <person name="Toyoda A."/>
            <person name="Sakaki Y."/>
            <person name="Kobayashi M."/>
            <person name="Seki M."/>
            <person name="Shinozaki K."/>
        </authorList>
    </citation>
    <scope>NUCLEOTIDE SEQUENCE [LARGE SCALE MRNA]</scope>
    <source>
        <strain>cv. Columbia</strain>
    </source>
</reference>
<reference key="4">
    <citation type="submission" date="2002-03" db="EMBL/GenBank/DDBJ databases">
        <title>Full-length cDNA from Arabidopsis thaliana.</title>
        <authorList>
            <person name="Brover V.V."/>
            <person name="Troukhan M.E."/>
            <person name="Alexandrov N.A."/>
            <person name="Lu Y.-P."/>
            <person name="Flavell R.B."/>
            <person name="Feldmann K.A."/>
        </authorList>
    </citation>
    <scope>NUCLEOTIDE SEQUENCE [LARGE SCALE MRNA]</scope>
</reference>
<reference key="5">
    <citation type="journal article" date="2004" name="Plant Mol. Biol.">
        <title>Functional genomic analysis of Arabidopsis thaliana glycoside hydrolase family 1.</title>
        <authorList>
            <person name="Xu Z."/>
            <person name="Escamilla-Trevino L.L."/>
            <person name="Zeng L."/>
            <person name="Lalgondar M."/>
            <person name="Bevan D.R."/>
            <person name="Winkel B.S.J."/>
            <person name="Mohamed A."/>
            <person name="Cheng C.-L."/>
            <person name="Shih M.-C."/>
            <person name="Poulton J.E."/>
            <person name="Esen A."/>
        </authorList>
    </citation>
    <scope>FUNCTION</scope>
    <scope>CATALYTIC ACTIVITY</scope>
    <scope>BIOPHYSICOCHEMICAL PROPERTIES</scope>
    <scope>GENE FAMILY</scope>
    <scope>NOMENCLATURE</scope>
</reference>
<organism>
    <name type="scientific">Arabidopsis thaliana</name>
    <name type="common">Mouse-ear cress</name>
    <dbReference type="NCBI Taxonomy" id="3702"/>
    <lineage>
        <taxon>Eukaryota</taxon>
        <taxon>Viridiplantae</taxon>
        <taxon>Streptophyta</taxon>
        <taxon>Embryophyta</taxon>
        <taxon>Tracheophyta</taxon>
        <taxon>Spermatophyta</taxon>
        <taxon>Magnoliopsida</taxon>
        <taxon>eudicotyledons</taxon>
        <taxon>Gunneridae</taxon>
        <taxon>Pentapetalae</taxon>
        <taxon>rosids</taxon>
        <taxon>malvids</taxon>
        <taxon>Brassicales</taxon>
        <taxon>Brassicaceae</taxon>
        <taxon>Camelineae</taxon>
        <taxon>Arabidopsis</taxon>
    </lineage>
</organism>
<keyword id="KW-1015">Disulfide bond</keyword>
<keyword id="KW-0325">Glycoprotein</keyword>
<keyword id="KW-0326">Glycosidase</keyword>
<keyword id="KW-0378">Hydrolase</keyword>
<keyword id="KW-0479">Metal-binding</keyword>
<keyword id="KW-1185">Reference proteome</keyword>
<keyword id="KW-0964">Secreted</keyword>
<keyword id="KW-0732">Signal</keyword>
<keyword id="KW-0862">Zinc</keyword>
<feature type="signal peptide" evidence="5">
    <location>
        <begin position="1"/>
        <end position="23"/>
    </location>
</feature>
<feature type="chain" id="PRO_0000383462" description="Beta-glucosidase 44">
    <location>
        <begin position="24"/>
        <end position="512"/>
    </location>
</feature>
<feature type="active site" description="Proton donor" evidence="3">
    <location>
        <position position="205"/>
    </location>
</feature>
<feature type="active site" description="Nucleophile" evidence="3">
    <location>
        <position position="419"/>
    </location>
</feature>
<feature type="binding site" evidence="3">
    <location>
        <position position="58"/>
    </location>
    <ligand>
        <name>a beta-D-glucoside</name>
        <dbReference type="ChEBI" id="CHEBI:22798"/>
    </ligand>
</feature>
<feature type="binding site" evidence="3">
    <location>
        <position position="159"/>
    </location>
    <ligand>
        <name>a beta-D-glucoside</name>
        <dbReference type="ChEBI" id="CHEBI:22798"/>
    </ligand>
</feature>
<feature type="binding site" evidence="3">
    <location>
        <begin position="204"/>
        <end position="205"/>
    </location>
    <ligand>
        <name>a beta-D-glucoside</name>
        <dbReference type="ChEBI" id="CHEBI:22798"/>
    </ligand>
</feature>
<feature type="binding site" evidence="3">
    <location>
        <position position="347"/>
    </location>
    <ligand>
        <name>a beta-D-glucoside</name>
        <dbReference type="ChEBI" id="CHEBI:22798"/>
    </ligand>
</feature>
<feature type="binding site" evidence="4">
    <location>
        <position position="419"/>
    </location>
    <ligand>
        <name>a beta-D-glucoside</name>
        <dbReference type="ChEBI" id="CHEBI:22798"/>
    </ligand>
</feature>
<feature type="binding site" evidence="3">
    <location>
        <position position="466"/>
    </location>
    <ligand>
        <name>a beta-D-glucoside</name>
        <dbReference type="ChEBI" id="CHEBI:22798"/>
    </ligand>
</feature>
<feature type="binding site" evidence="3">
    <location>
        <begin position="473"/>
        <end position="474"/>
    </location>
    <ligand>
        <name>a beta-D-glucoside</name>
        <dbReference type="ChEBI" id="CHEBI:22798"/>
    </ligand>
</feature>
<feature type="binding site" evidence="1">
    <location>
        <position position="482"/>
    </location>
    <ligand>
        <name>a beta-D-glucoside</name>
        <dbReference type="ChEBI" id="CHEBI:22798"/>
    </ligand>
</feature>
<feature type="glycosylation site" description="N-linked (GlcNAc...) asparagine" evidence="6">
    <location>
        <position position="86"/>
    </location>
</feature>
<feature type="glycosylation site" description="N-linked (GlcNAc...) asparagine" evidence="6">
    <location>
        <position position="230"/>
    </location>
</feature>
<feature type="glycosylation site" description="N-linked (GlcNAc...) asparagine" evidence="6">
    <location>
        <position position="427"/>
    </location>
</feature>
<feature type="disulfide bond" evidence="3">
    <location>
        <begin position="224"/>
        <end position="231"/>
    </location>
</feature>
<sequence>MRHLSSPPWPLLLLLLLSSFTSGESSLSAEKNKLHTGGLSRQSFPKGFVFGTATSAYQVEGETHQDGRGPSIWDAFVKIPGKIAKNATAEITVDQYHRYKEDVDLMKKLNFDAYRFSISWSRIFPEGSGKVNWKGVAYYNRLIDYMVQKGITPYANLYHYDLPLALENKYKGLLGRQVVKDFADYAEFCYKTFGDRVKNWMTFNEPRVVAALGYDNGIFAPGRCSKAFGNCTEGNSATEPYIVTHHLILAHAAAVQRYRKYYQAKQKGRVGILLDFVWYEPLTRSKADNLAAQRARDFHIGWFIHPLVYGEYPKTMQNIVKERLPKFTEKEVKMVKGSIDFVGINQYTTYYMSEPHPTTKPKDLGYQQDWNVEFGFAKLGKPIGPRAYSSWLYNVPWGMYKALMYMKERYGNPTMILSENGMDDPGNVTLAQGLHDTTRIKYYKDYLTNLKKARDDGANVVGYFAWSLLDNFEWLSGYTSRFGIVYVDYKTLKRYPKMSAQWFKQLLKRNNK</sequence>
<protein>
    <recommendedName>
        <fullName evidence="8">Beta-glucosidase 44</fullName>
        <shortName evidence="8">AtBGLU44</shortName>
        <ecNumber evidence="7">3.2.1.21</ecNumber>
    </recommendedName>
</protein>
<accession>Q9LV33</accession>
<comment type="function">
    <text evidence="7">Hydrolyzes p-nitrophenyl beta-D-glucoside, p-nitrophenyl beta-D-mannoside, cellobiose, 4-methylumbelliferyl-beta-D-glucoside, laminarin, amygdalin, esculin and gentiobiose.</text>
</comment>
<comment type="catalytic activity">
    <reaction evidence="7">
        <text>Hydrolysis of terminal, non-reducing beta-D-glucosyl residues with release of beta-D-glucose.</text>
        <dbReference type="EC" id="3.2.1.21"/>
    </reaction>
</comment>
<comment type="biophysicochemical properties">
    <kinetics>
        <KM evidence="7">0.43 mM for p-nitrophenyl-beta-D-mannopyranoside</KM>
        <Vmax evidence="7">94.7 nmol/sec/mg enzyme with p-nitrophenyl-beta-D-mannopyranoside as substrate</Vmax>
    </kinetics>
    <phDependence>
        <text evidence="7">Optimum pH is 4.5.</text>
    </phDependence>
</comment>
<comment type="subunit">
    <text evidence="2 9">Homodimer.</text>
</comment>
<comment type="subcellular location">
    <subcellularLocation>
        <location evidence="9">Secreted</location>
    </subcellularLocation>
</comment>
<comment type="similarity">
    <text evidence="9">Belongs to the glycosyl hydrolase 1 family.</text>
</comment>